<accession>Q2FHJ8</accession>
<keyword id="KW-0963">Cytoplasm</keyword>
<keyword id="KW-0489">Methyltransferase</keyword>
<keyword id="KW-0949">S-adenosyl-L-methionine</keyword>
<keyword id="KW-0808">Transferase</keyword>
<keyword id="KW-0819">tRNA processing</keyword>
<protein>
    <recommendedName>
        <fullName evidence="1">tRNA (guanine-N(1)-)-methyltransferase</fullName>
        <ecNumber evidence="1">2.1.1.228</ecNumber>
    </recommendedName>
    <alternativeName>
        <fullName evidence="1">M1G-methyltransferase</fullName>
    </alternativeName>
    <alternativeName>
        <fullName evidence="1">tRNA [GM37] methyltransferase</fullName>
    </alternativeName>
</protein>
<evidence type="ECO:0000255" key="1">
    <source>
        <dbReference type="HAMAP-Rule" id="MF_00605"/>
    </source>
</evidence>
<feature type="chain" id="PRO_0000257475" description="tRNA (guanine-N(1)-)-methyltransferase">
    <location>
        <begin position="1"/>
        <end position="245"/>
    </location>
</feature>
<feature type="binding site" evidence="1">
    <location>
        <position position="111"/>
    </location>
    <ligand>
        <name>S-adenosyl-L-methionine</name>
        <dbReference type="ChEBI" id="CHEBI:59789"/>
    </ligand>
</feature>
<feature type="binding site" evidence="1">
    <location>
        <begin position="131"/>
        <end position="136"/>
    </location>
    <ligand>
        <name>S-adenosyl-L-methionine</name>
        <dbReference type="ChEBI" id="CHEBI:59789"/>
    </ligand>
</feature>
<gene>
    <name evidence="1" type="primary">trmD</name>
    <name type="ordered locus">SAUSA300_1133</name>
</gene>
<reference key="1">
    <citation type="journal article" date="2006" name="Lancet">
        <title>Complete genome sequence of USA300, an epidemic clone of community-acquired meticillin-resistant Staphylococcus aureus.</title>
        <authorList>
            <person name="Diep B.A."/>
            <person name="Gill S.R."/>
            <person name="Chang R.F."/>
            <person name="Phan T.H."/>
            <person name="Chen J.H."/>
            <person name="Davidson M.G."/>
            <person name="Lin F."/>
            <person name="Lin J."/>
            <person name="Carleton H.A."/>
            <person name="Mongodin E.F."/>
            <person name="Sensabaugh G.F."/>
            <person name="Perdreau-Remington F."/>
        </authorList>
    </citation>
    <scope>NUCLEOTIDE SEQUENCE [LARGE SCALE GENOMIC DNA]</scope>
    <source>
        <strain>USA300</strain>
    </source>
</reference>
<dbReference type="EC" id="2.1.1.228" evidence="1"/>
<dbReference type="EMBL" id="CP000255">
    <property type="protein sequence ID" value="ABD21346.1"/>
    <property type="molecule type" value="Genomic_DNA"/>
</dbReference>
<dbReference type="RefSeq" id="WP_000687328.1">
    <property type="nucleotide sequence ID" value="NZ_CP027476.1"/>
</dbReference>
<dbReference type="SMR" id="Q2FHJ8"/>
<dbReference type="KEGG" id="saa:SAUSA300_1133"/>
<dbReference type="HOGENOM" id="CLU_047363_0_1_9"/>
<dbReference type="Proteomes" id="UP000001939">
    <property type="component" value="Chromosome"/>
</dbReference>
<dbReference type="GO" id="GO:0005829">
    <property type="term" value="C:cytosol"/>
    <property type="evidence" value="ECO:0007669"/>
    <property type="project" value="TreeGrafter"/>
</dbReference>
<dbReference type="GO" id="GO:0052906">
    <property type="term" value="F:tRNA (guanine(37)-N1)-methyltransferase activity"/>
    <property type="evidence" value="ECO:0007669"/>
    <property type="project" value="UniProtKB-UniRule"/>
</dbReference>
<dbReference type="GO" id="GO:0002939">
    <property type="term" value="P:tRNA N1-guanine methylation"/>
    <property type="evidence" value="ECO:0007669"/>
    <property type="project" value="TreeGrafter"/>
</dbReference>
<dbReference type="CDD" id="cd18080">
    <property type="entry name" value="TrmD-like"/>
    <property type="match status" value="1"/>
</dbReference>
<dbReference type="FunFam" id="1.10.1270.20:FF:000001">
    <property type="entry name" value="tRNA (guanine-N(1)-)-methyltransferase"/>
    <property type="match status" value="1"/>
</dbReference>
<dbReference type="FunFam" id="3.40.1280.10:FF:000001">
    <property type="entry name" value="tRNA (guanine-N(1)-)-methyltransferase"/>
    <property type="match status" value="1"/>
</dbReference>
<dbReference type="Gene3D" id="3.40.1280.10">
    <property type="match status" value="1"/>
</dbReference>
<dbReference type="Gene3D" id="1.10.1270.20">
    <property type="entry name" value="tRNA(m1g37)methyltransferase, domain 2"/>
    <property type="match status" value="1"/>
</dbReference>
<dbReference type="HAMAP" id="MF_00605">
    <property type="entry name" value="TrmD"/>
    <property type="match status" value="1"/>
</dbReference>
<dbReference type="InterPro" id="IPR029028">
    <property type="entry name" value="Alpha/beta_knot_MTases"/>
</dbReference>
<dbReference type="InterPro" id="IPR023148">
    <property type="entry name" value="tRNA_m1G_MeTrfase_C_sf"/>
</dbReference>
<dbReference type="InterPro" id="IPR002649">
    <property type="entry name" value="tRNA_m1G_MeTrfase_TrmD"/>
</dbReference>
<dbReference type="InterPro" id="IPR029026">
    <property type="entry name" value="tRNA_m1G_MTases_N"/>
</dbReference>
<dbReference type="InterPro" id="IPR016009">
    <property type="entry name" value="tRNA_MeTrfase_TRMD/TRM10"/>
</dbReference>
<dbReference type="NCBIfam" id="NF000648">
    <property type="entry name" value="PRK00026.1"/>
    <property type="match status" value="1"/>
</dbReference>
<dbReference type="NCBIfam" id="TIGR00088">
    <property type="entry name" value="trmD"/>
    <property type="match status" value="1"/>
</dbReference>
<dbReference type="PANTHER" id="PTHR46417">
    <property type="entry name" value="TRNA (GUANINE-N(1)-)-METHYLTRANSFERASE"/>
    <property type="match status" value="1"/>
</dbReference>
<dbReference type="PANTHER" id="PTHR46417:SF1">
    <property type="entry name" value="TRNA (GUANINE-N(1)-)-METHYLTRANSFERASE"/>
    <property type="match status" value="1"/>
</dbReference>
<dbReference type="Pfam" id="PF01746">
    <property type="entry name" value="tRNA_m1G_MT"/>
    <property type="match status" value="1"/>
</dbReference>
<dbReference type="PIRSF" id="PIRSF000386">
    <property type="entry name" value="tRNA_mtase"/>
    <property type="match status" value="1"/>
</dbReference>
<dbReference type="SUPFAM" id="SSF75217">
    <property type="entry name" value="alpha/beta knot"/>
    <property type="match status" value="1"/>
</dbReference>
<sequence length="245" mass="28056">MKIDYLTLFPEMFDGVLNHSIMKRAQENNKLQINTVNFRDYAINKHNQVDDYPYGGGQGMVLKPEPVFNAMEDLDVTEQTRVILMCPQGEPFSHQKAVELSKADHIVFICGHYEGYDERIRTHLVTDEISMGDYVLTGGELPAMTMTDAIVRLIPGVLGNEQSHQDDSFSDGLLEFPQYTRPREFKGLTVPDVLLSGNHANIDAWRHEQKLIRTYNKRPDLIEKYPLTNADKQILERYKIGLKKG</sequence>
<proteinExistence type="inferred from homology"/>
<organism>
    <name type="scientific">Staphylococcus aureus (strain USA300)</name>
    <dbReference type="NCBI Taxonomy" id="367830"/>
    <lineage>
        <taxon>Bacteria</taxon>
        <taxon>Bacillati</taxon>
        <taxon>Bacillota</taxon>
        <taxon>Bacilli</taxon>
        <taxon>Bacillales</taxon>
        <taxon>Staphylococcaceae</taxon>
        <taxon>Staphylococcus</taxon>
    </lineage>
</organism>
<comment type="function">
    <text evidence="1">Specifically methylates guanosine-37 in various tRNAs.</text>
</comment>
<comment type="catalytic activity">
    <reaction evidence="1">
        <text>guanosine(37) in tRNA + S-adenosyl-L-methionine = N(1)-methylguanosine(37) in tRNA + S-adenosyl-L-homocysteine + H(+)</text>
        <dbReference type="Rhea" id="RHEA:36899"/>
        <dbReference type="Rhea" id="RHEA-COMP:10145"/>
        <dbReference type="Rhea" id="RHEA-COMP:10147"/>
        <dbReference type="ChEBI" id="CHEBI:15378"/>
        <dbReference type="ChEBI" id="CHEBI:57856"/>
        <dbReference type="ChEBI" id="CHEBI:59789"/>
        <dbReference type="ChEBI" id="CHEBI:73542"/>
        <dbReference type="ChEBI" id="CHEBI:74269"/>
        <dbReference type="EC" id="2.1.1.228"/>
    </reaction>
</comment>
<comment type="subunit">
    <text evidence="1">Homodimer.</text>
</comment>
<comment type="subcellular location">
    <subcellularLocation>
        <location evidence="1">Cytoplasm</location>
    </subcellularLocation>
</comment>
<comment type="similarity">
    <text evidence="1">Belongs to the RNA methyltransferase TrmD family.</text>
</comment>
<name>TRMD_STAA3</name>